<comment type="function">
    <text evidence="1">May be involved in ribosome biogenesis.</text>
</comment>
<comment type="interaction">
    <interactant intactId="EBI-5457304">
        <id>Q9NSI2</id>
    </interactant>
    <interactant intactId="EBI-618309">
        <id>Q08379</id>
        <label>GOLGA2</label>
    </interactant>
    <organismsDiffer>false</organismsDiffer>
    <experiments>4</experiments>
</comment>
<comment type="interaction">
    <interactant intactId="EBI-5457304">
        <id>Q9NSI2</id>
    </interactant>
    <interactant intactId="EBI-5916454">
        <id>A6NEM1</id>
        <label>GOLGA6L9</label>
    </interactant>
    <organismsDiffer>false</organismsDiffer>
    <experiments>3</experiments>
</comment>
<comment type="interaction">
    <interactant intactId="EBI-5457304">
        <id>Q9NSI2</id>
    </interactant>
    <interactant intactId="EBI-79165">
        <id>Q9NRD5</id>
        <label>PICK1</label>
    </interactant>
    <organismsDiffer>false</organismsDiffer>
    <experiments>3</experiments>
</comment>
<comment type="subcellular location">
    <subcellularLocation>
        <location evidence="1">Nucleus</location>
        <location evidence="1">Nucleolus</location>
    </subcellularLocation>
</comment>
<comment type="alternative products">
    <event type="alternative splicing"/>
    <isoform>
        <id>Q9NSI2-1</id>
        <name>A</name>
        <sequence type="displayed"/>
    </isoform>
    <isoform>
        <id>Q9NSI2-2</id>
        <name>B</name>
        <sequence type="described" ref="VSP_003831"/>
    </isoform>
</comment>
<comment type="tissue specificity">
    <text>Not detected in any tested tissue.</text>
</comment>
<comment type="similarity">
    <text evidence="4">Belongs to the SLX9 family.</text>
</comment>
<gene>
    <name evidence="5" type="primary">SLX9</name>
    <name type="synonym">C21orf70</name>
    <name type="synonym">FAM207A</name>
    <name type="ORF">PRED56</name>
</gene>
<dbReference type="EMBL" id="AF391113">
    <property type="protein sequence ID" value="AAL34504.1"/>
    <property type="molecule type" value="mRNA"/>
</dbReference>
<dbReference type="EMBL" id="AF391114">
    <property type="protein sequence ID" value="AAL34505.1"/>
    <property type="molecule type" value="mRNA"/>
</dbReference>
<dbReference type="EMBL" id="AL163301">
    <property type="protein sequence ID" value="CAB90492.1"/>
    <property type="status" value="ALT_SEQ"/>
    <property type="molecule type" value="Genomic_DNA"/>
</dbReference>
<dbReference type="EMBL" id="BC009341">
    <property type="protein sequence ID" value="AAH09341.1"/>
    <property type="molecule type" value="mRNA"/>
</dbReference>
<dbReference type="CCDS" id="CCDS13718.1">
    <molecule id="Q9NSI2-1"/>
</dbReference>
<dbReference type="CCDS" id="CCDS82682.1">
    <molecule id="Q9NSI2-2"/>
</dbReference>
<dbReference type="RefSeq" id="NP_001303912.1">
    <property type="nucleotide sequence ID" value="NM_001316983.1"/>
</dbReference>
<dbReference type="RefSeq" id="NP_001303913.1">
    <molecule id="Q9NSI2-2"/>
    <property type="nucleotide sequence ID" value="NM_001316984.2"/>
</dbReference>
<dbReference type="RefSeq" id="NP_001303914.1">
    <property type="nucleotide sequence ID" value="NM_001316985.1"/>
</dbReference>
<dbReference type="RefSeq" id="NP_001303915.1">
    <property type="nucleotide sequence ID" value="NM_001316986.1"/>
</dbReference>
<dbReference type="RefSeq" id="NP_001303917.1">
    <property type="nucleotide sequence ID" value="NM_001316988.1"/>
</dbReference>
<dbReference type="RefSeq" id="NP_478070.1">
    <molecule id="Q9NSI2-1"/>
    <property type="nucleotide sequence ID" value="NM_058190.4"/>
</dbReference>
<dbReference type="PDB" id="7WTS">
    <property type="method" value="EM"/>
    <property type="resolution" value="3.20 A"/>
    <property type="chains" value="z=1-230"/>
</dbReference>
<dbReference type="PDB" id="7WTT">
    <property type="method" value="EM"/>
    <property type="resolution" value="3.10 A"/>
    <property type="chains" value="z=1-230"/>
</dbReference>
<dbReference type="PDB" id="7WTU">
    <property type="method" value="EM"/>
    <property type="resolution" value="3.00 A"/>
    <property type="chains" value="z=1-230"/>
</dbReference>
<dbReference type="PDB" id="7WTV">
    <property type="method" value="EM"/>
    <property type="resolution" value="3.50 A"/>
    <property type="chains" value="z=1-230"/>
</dbReference>
<dbReference type="PDB" id="7WTW">
    <property type="method" value="EM"/>
    <property type="resolution" value="3.20 A"/>
    <property type="chains" value="z=1-230"/>
</dbReference>
<dbReference type="PDBsum" id="7WTS"/>
<dbReference type="PDBsum" id="7WTT"/>
<dbReference type="PDBsum" id="7WTU"/>
<dbReference type="PDBsum" id="7WTV"/>
<dbReference type="PDBsum" id="7WTW"/>
<dbReference type="EMDB" id="EMD-32799"/>
<dbReference type="EMDB" id="EMD-32800"/>
<dbReference type="EMDB" id="EMD-32801"/>
<dbReference type="EMDB" id="EMD-32802"/>
<dbReference type="EMDB" id="EMD-32803"/>
<dbReference type="SMR" id="Q9NSI2"/>
<dbReference type="BioGRID" id="124511">
    <property type="interactions" value="204"/>
</dbReference>
<dbReference type="FunCoup" id="Q9NSI2">
    <property type="interactions" value="1300"/>
</dbReference>
<dbReference type="IntAct" id="Q9NSI2">
    <property type="interactions" value="70"/>
</dbReference>
<dbReference type="MINT" id="Q9NSI2"/>
<dbReference type="STRING" id="9606.ENSP00000291634"/>
<dbReference type="GlyGen" id="Q9NSI2">
    <property type="glycosylation" value="2 sites, 1 O-linked glycan (1 site)"/>
</dbReference>
<dbReference type="iPTMnet" id="Q9NSI2"/>
<dbReference type="PhosphoSitePlus" id="Q9NSI2"/>
<dbReference type="BioMuta" id="FAM207A"/>
<dbReference type="DMDM" id="17865450"/>
<dbReference type="jPOST" id="Q9NSI2"/>
<dbReference type="MassIVE" id="Q9NSI2"/>
<dbReference type="PaxDb" id="9606-ENSP00000291634"/>
<dbReference type="PeptideAtlas" id="Q9NSI2"/>
<dbReference type="ProteomicsDB" id="82552">
    <molecule id="Q9NSI2-1"/>
</dbReference>
<dbReference type="ProteomicsDB" id="82553">
    <molecule id="Q9NSI2-2"/>
</dbReference>
<dbReference type="Pumba" id="Q9NSI2"/>
<dbReference type="Antibodypedia" id="49420">
    <property type="antibodies" value="97 antibodies from 15 providers"/>
</dbReference>
<dbReference type="DNASU" id="85395"/>
<dbReference type="Ensembl" id="ENST00000291634.11">
    <molecule id="Q9NSI2-1"/>
    <property type="protein sequence ID" value="ENSP00000291634.6"/>
    <property type="gene ID" value="ENSG00000160256.14"/>
</dbReference>
<dbReference type="Ensembl" id="ENST00000397826.8">
    <molecule id="Q9NSI2-2"/>
    <property type="protein sequence ID" value="ENSP00000380926.3"/>
    <property type="gene ID" value="ENSG00000160256.14"/>
</dbReference>
<dbReference type="GeneID" id="85395"/>
<dbReference type="KEGG" id="hsa:85395"/>
<dbReference type="MANE-Select" id="ENST00000291634.11">
    <property type="protein sequence ID" value="ENSP00000291634.6"/>
    <property type="RefSeq nucleotide sequence ID" value="NM_058190.4"/>
    <property type="RefSeq protein sequence ID" value="NP_478070.1"/>
</dbReference>
<dbReference type="UCSC" id="uc002zgl.4">
    <molecule id="Q9NSI2-1"/>
    <property type="organism name" value="human"/>
</dbReference>
<dbReference type="AGR" id="HGNC:15811"/>
<dbReference type="CTD" id="85395"/>
<dbReference type="GeneCards" id="SLX9"/>
<dbReference type="HGNC" id="HGNC:15811">
    <property type="gene designation" value="SLX9"/>
</dbReference>
<dbReference type="HPA" id="ENSG00000160256">
    <property type="expression patterns" value="Low tissue specificity"/>
</dbReference>
<dbReference type="neXtProt" id="NX_Q9NSI2"/>
<dbReference type="OpenTargets" id="ENSG00000160256"/>
<dbReference type="VEuPathDB" id="HostDB:ENSG00000160256"/>
<dbReference type="eggNOG" id="ENOG502S25R">
    <property type="taxonomic scope" value="Eukaryota"/>
</dbReference>
<dbReference type="GeneTree" id="ENSGT00390000015709"/>
<dbReference type="HOGENOM" id="CLU_099072_0_0_1"/>
<dbReference type="InParanoid" id="Q9NSI2"/>
<dbReference type="OMA" id="GAKEWAF"/>
<dbReference type="OrthoDB" id="18703at2759"/>
<dbReference type="PAN-GO" id="Q9NSI2">
    <property type="GO annotations" value="0 GO annotations based on evolutionary models"/>
</dbReference>
<dbReference type="PhylomeDB" id="Q9NSI2"/>
<dbReference type="TreeFam" id="TF336348"/>
<dbReference type="PathwayCommons" id="Q9NSI2"/>
<dbReference type="SignaLink" id="Q9NSI2"/>
<dbReference type="BioGRID-ORCS" id="85395">
    <property type="hits" value="88 hits in 1157 CRISPR screens"/>
</dbReference>
<dbReference type="CD-CODE" id="91857CE7">
    <property type="entry name" value="Nucleolus"/>
</dbReference>
<dbReference type="GenomeRNAi" id="85395"/>
<dbReference type="Pharos" id="Q9NSI2">
    <property type="development level" value="Tdark"/>
</dbReference>
<dbReference type="PRO" id="PR:Q9NSI2"/>
<dbReference type="Proteomes" id="UP000005640">
    <property type="component" value="Chromosome 21"/>
</dbReference>
<dbReference type="RNAct" id="Q9NSI2">
    <property type="molecule type" value="protein"/>
</dbReference>
<dbReference type="Bgee" id="ENSG00000160256">
    <property type="expression patterns" value="Expressed in popliteal artery and 151 other cell types or tissues"/>
</dbReference>
<dbReference type="ExpressionAtlas" id="Q9NSI2">
    <property type="expression patterns" value="baseline and differential"/>
</dbReference>
<dbReference type="GO" id="GO:0030686">
    <property type="term" value="C:90S preribosome"/>
    <property type="evidence" value="ECO:0007669"/>
    <property type="project" value="InterPro"/>
</dbReference>
<dbReference type="GO" id="GO:0005730">
    <property type="term" value="C:nucleolus"/>
    <property type="evidence" value="ECO:0007669"/>
    <property type="project" value="UniProtKB-SubCell"/>
</dbReference>
<dbReference type="GO" id="GO:0030688">
    <property type="term" value="C:preribosome, small subunit precursor"/>
    <property type="evidence" value="ECO:0007669"/>
    <property type="project" value="InterPro"/>
</dbReference>
<dbReference type="GO" id="GO:0000462">
    <property type="term" value="P:maturation of SSU-rRNA from tricistronic rRNA transcript (SSU-rRNA, 5.8S rRNA, LSU-rRNA)"/>
    <property type="evidence" value="ECO:0007669"/>
    <property type="project" value="InterPro"/>
</dbReference>
<dbReference type="InterPro" id="IPR028160">
    <property type="entry name" value="Slx9-like"/>
</dbReference>
<dbReference type="PANTHER" id="PTHR31109">
    <property type="entry name" value="PROTEIN FAM207A"/>
    <property type="match status" value="1"/>
</dbReference>
<dbReference type="PANTHER" id="PTHR31109:SF2">
    <property type="entry name" value="RIBOSOME BIOGENESIS PROTEIN SLX9 HOMOLOG"/>
    <property type="match status" value="1"/>
</dbReference>
<dbReference type="Pfam" id="PF15341">
    <property type="entry name" value="SLX9"/>
    <property type="match status" value="1"/>
</dbReference>
<evidence type="ECO:0000250" key="1">
    <source>
        <dbReference type="UniProtKB" id="P53251"/>
    </source>
</evidence>
<evidence type="ECO:0000256" key="2">
    <source>
        <dbReference type="SAM" id="MobiDB-lite"/>
    </source>
</evidence>
<evidence type="ECO:0000303" key="3">
    <source>
    </source>
</evidence>
<evidence type="ECO:0000305" key="4"/>
<evidence type="ECO:0000312" key="5">
    <source>
        <dbReference type="HGNC" id="HGNC:15811"/>
    </source>
</evidence>
<evidence type="ECO:0007744" key="6">
    <source>
    </source>
</evidence>
<evidence type="ECO:0007744" key="7">
    <source>
    </source>
</evidence>
<evidence type="ECO:0007744" key="8">
    <source>
    </source>
</evidence>
<evidence type="ECO:0007744" key="9">
    <source>
    </source>
</evidence>
<evidence type="ECO:0007744" key="10">
    <source>
    </source>
</evidence>
<evidence type="ECO:0007829" key="11">
    <source>
        <dbReference type="PDB" id="7WTT"/>
    </source>
</evidence>
<evidence type="ECO:0007829" key="12">
    <source>
        <dbReference type="PDB" id="7WTU"/>
    </source>
</evidence>
<feature type="chain" id="PRO_0000079528" description="Ribosome biogenesis protein SLX9 homolog">
    <location>
        <begin position="1"/>
        <end position="230"/>
    </location>
</feature>
<feature type="region of interest" description="Disordered" evidence="2">
    <location>
        <begin position="1"/>
        <end position="42"/>
    </location>
</feature>
<feature type="region of interest" description="Disordered" evidence="2">
    <location>
        <begin position="155"/>
        <end position="187"/>
    </location>
</feature>
<feature type="compositionally biased region" description="Basic residues" evidence="2">
    <location>
        <begin position="1"/>
        <end position="11"/>
    </location>
</feature>
<feature type="compositionally biased region" description="Pro residues" evidence="2">
    <location>
        <begin position="25"/>
        <end position="38"/>
    </location>
</feature>
<feature type="compositionally biased region" description="Basic and acidic residues" evidence="2">
    <location>
        <begin position="166"/>
        <end position="177"/>
    </location>
</feature>
<feature type="modified residue" description="Phosphothreonine" evidence="7 8 9 10">
    <location>
        <position position="34"/>
    </location>
</feature>
<feature type="modified residue" description="Phosphoserine" evidence="6 9 10">
    <location>
        <position position="203"/>
    </location>
</feature>
<feature type="splice variant" id="VSP_003831" description="In isoform B." evidence="3">
    <location>
        <begin position="81"/>
        <end position="95"/>
    </location>
</feature>
<feature type="sequence variant" id="VAR_021949" description="In dbSNP:rs3737075.">
    <original>V</original>
    <variation>L</variation>
    <location>
        <position position="212"/>
    </location>
</feature>
<feature type="helix" evidence="12">
    <location>
        <begin position="104"/>
        <end position="129"/>
    </location>
</feature>
<feature type="strand" evidence="11">
    <location>
        <begin position="178"/>
        <end position="181"/>
    </location>
</feature>
<feature type="helix" evidence="12">
    <location>
        <begin position="183"/>
        <end position="201"/>
    </location>
</feature>
<feature type="turn" evidence="12">
    <location>
        <begin position="205"/>
        <end position="208"/>
    </location>
</feature>
<feature type="helix" evidence="12">
    <location>
        <begin position="210"/>
        <end position="224"/>
    </location>
</feature>
<name>SLX9_HUMAN</name>
<sequence length="230" mass="25456">MGKVRGLRARVHQAAVRPKGEAAPGPAPPAPEATPPPASAAGKDWAFINTNIFARTKIDPSALVQKLELDVRSVTSVRRGEAGSSARSVPSIRRGAEAKTVLPKKEKMKLRREQWLQKIEAIKLAEQKHREERRRRATVVVGDLHPLRDALPELLGLEAGSRRQARSRESNKPRPSELSRMSAAQRQQLLEEERTRFQELLASPAYRASPLVAIGQTLARQMQLEDGGQL</sequence>
<accession>Q9NSI2</accession>
<reference key="1">
    <citation type="journal article" date="2001" name="Genomics">
        <title>From PREDs and open reading frames to cDNA isolation: revisiting the human chromosome 21 transcription map.</title>
        <authorList>
            <person name="Reymond A."/>
            <person name="Friedli M."/>
            <person name="Neergaard Henrichsen C."/>
            <person name="Chapot F."/>
            <person name="Deutsch S."/>
            <person name="Ucla C."/>
            <person name="Rossier C."/>
            <person name="Lyle R."/>
            <person name="Guipponi M."/>
            <person name="Antonarakis S.E."/>
        </authorList>
    </citation>
    <scope>NUCLEOTIDE SEQUENCE [MRNA] (ISOFORMS A AND B)</scope>
</reference>
<reference key="2">
    <citation type="journal article" date="2000" name="Nature">
        <title>The DNA sequence of human chromosome 21.</title>
        <authorList>
            <person name="Hattori M."/>
            <person name="Fujiyama A."/>
            <person name="Taylor T.D."/>
            <person name="Watanabe H."/>
            <person name="Yada T."/>
            <person name="Park H.-S."/>
            <person name="Toyoda A."/>
            <person name="Ishii K."/>
            <person name="Totoki Y."/>
            <person name="Choi D.-K."/>
            <person name="Groner Y."/>
            <person name="Soeda E."/>
            <person name="Ohki M."/>
            <person name="Takagi T."/>
            <person name="Sakaki Y."/>
            <person name="Taudien S."/>
            <person name="Blechschmidt K."/>
            <person name="Polley A."/>
            <person name="Menzel U."/>
            <person name="Delabar J."/>
            <person name="Kumpf K."/>
            <person name="Lehmann R."/>
            <person name="Patterson D."/>
            <person name="Reichwald K."/>
            <person name="Rump A."/>
            <person name="Schillhabel M."/>
            <person name="Schudy A."/>
            <person name="Zimmermann W."/>
            <person name="Rosenthal A."/>
            <person name="Kudoh J."/>
            <person name="Shibuya K."/>
            <person name="Kawasaki K."/>
            <person name="Asakawa S."/>
            <person name="Shintani A."/>
            <person name="Sasaki T."/>
            <person name="Nagamine K."/>
            <person name="Mitsuyama S."/>
            <person name="Antonarakis S.E."/>
            <person name="Minoshima S."/>
            <person name="Shimizu N."/>
            <person name="Nordsiek G."/>
            <person name="Hornischer K."/>
            <person name="Brandt P."/>
            <person name="Scharfe M."/>
            <person name="Schoen O."/>
            <person name="Desario A."/>
            <person name="Reichelt J."/>
            <person name="Kauer G."/>
            <person name="Bloecker H."/>
            <person name="Ramser J."/>
            <person name="Beck A."/>
            <person name="Klages S."/>
            <person name="Hennig S."/>
            <person name="Riesselmann L."/>
            <person name="Dagand E."/>
            <person name="Wehrmeyer S."/>
            <person name="Borzym K."/>
            <person name="Gardiner K."/>
            <person name="Nizetic D."/>
            <person name="Francis F."/>
            <person name="Lehrach H."/>
            <person name="Reinhardt R."/>
            <person name="Yaspo M.-L."/>
        </authorList>
    </citation>
    <scope>NUCLEOTIDE SEQUENCE [LARGE SCALE GENOMIC DNA]</scope>
</reference>
<reference key="3">
    <citation type="journal article" date="2004" name="Genome Res.">
        <title>The status, quality, and expansion of the NIH full-length cDNA project: the Mammalian Gene Collection (MGC).</title>
        <authorList>
            <consortium name="The MGC Project Team"/>
        </authorList>
    </citation>
    <scope>NUCLEOTIDE SEQUENCE [LARGE SCALE MRNA] (ISOFORM A)</scope>
    <source>
        <tissue>Brain</tissue>
    </source>
</reference>
<reference key="4">
    <citation type="journal article" date="2006" name="Nat. Biotechnol.">
        <title>A probability-based approach for high-throughput protein phosphorylation analysis and site localization.</title>
        <authorList>
            <person name="Beausoleil S.A."/>
            <person name="Villen J."/>
            <person name="Gerber S.A."/>
            <person name="Rush J."/>
            <person name="Gygi S.P."/>
        </authorList>
    </citation>
    <scope>PHOSPHORYLATION [LARGE SCALE ANALYSIS] AT SER-203</scope>
    <scope>IDENTIFICATION BY MASS SPECTROMETRY [LARGE SCALE ANALYSIS]</scope>
    <source>
        <tissue>Cervix carcinoma</tissue>
    </source>
</reference>
<reference key="5">
    <citation type="journal article" date="2008" name="Mol. Cell">
        <title>Kinase-selective enrichment enables quantitative phosphoproteomics of the kinome across the cell cycle.</title>
        <authorList>
            <person name="Daub H."/>
            <person name="Olsen J.V."/>
            <person name="Bairlein M."/>
            <person name="Gnad F."/>
            <person name="Oppermann F.S."/>
            <person name="Korner R."/>
            <person name="Greff Z."/>
            <person name="Keri G."/>
            <person name="Stemmann O."/>
            <person name="Mann M."/>
        </authorList>
    </citation>
    <scope>PHOSPHORYLATION [LARGE SCALE ANALYSIS] AT THR-34</scope>
    <scope>IDENTIFICATION BY MASS SPECTROMETRY [LARGE SCALE ANALYSIS]</scope>
    <source>
        <tissue>Cervix carcinoma</tissue>
    </source>
</reference>
<reference key="6">
    <citation type="journal article" date="2008" name="Proc. Natl. Acad. Sci. U.S.A.">
        <title>A quantitative atlas of mitotic phosphorylation.</title>
        <authorList>
            <person name="Dephoure N."/>
            <person name="Zhou C."/>
            <person name="Villen J."/>
            <person name="Beausoleil S.A."/>
            <person name="Bakalarski C.E."/>
            <person name="Elledge S.J."/>
            <person name="Gygi S.P."/>
        </authorList>
    </citation>
    <scope>PHOSPHORYLATION [LARGE SCALE ANALYSIS] AT THR-34</scope>
    <scope>IDENTIFICATION BY MASS SPECTROMETRY [LARGE SCALE ANALYSIS]</scope>
    <source>
        <tissue>Cervix carcinoma</tissue>
    </source>
</reference>
<reference key="7">
    <citation type="journal article" date="2009" name="Anal. Chem.">
        <title>Lys-N and trypsin cover complementary parts of the phosphoproteome in a refined SCX-based approach.</title>
        <authorList>
            <person name="Gauci S."/>
            <person name="Helbig A.O."/>
            <person name="Slijper M."/>
            <person name="Krijgsveld J."/>
            <person name="Heck A.J."/>
            <person name="Mohammed S."/>
        </authorList>
    </citation>
    <scope>IDENTIFICATION BY MASS SPECTROMETRY [LARGE SCALE ANALYSIS]</scope>
</reference>
<reference key="8">
    <citation type="journal article" date="2010" name="Sci. Signal.">
        <title>Quantitative phosphoproteomics reveals widespread full phosphorylation site occupancy during mitosis.</title>
        <authorList>
            <person name="Olsen J.V."/>
            <person name="Vermeulen M."/>
            <person name="Santamaria A."/>
            <person name="Kumar C."/>
            <person name="Miller M.L."/>
            <person name="Jensen L.J."/>
            <person name="Gnad F."/>
            <person name="Cox J."/>
            <person name="Jensen T.S."/>
            <person name="Nigg E.A."/>
            <person name="Brunak S."/>
            <person name="Mann M."/>
        </authorList>
    </citation>
    <scope>PHOSPHORYLATION [LARGE SCALE ANALYSIS] AT THR-34 AND SER-203</scope>
    <scope>IDENTIFICATION BY MASS SPECTROMETRY [LARGE SCALE ANALYSIS]</scope>
    <source>
        <tissue>Cervix carcinoma</tissue>
    </source>
</reference>
<reference key="9">
    <citation type="journal article" date="2011" name="BMC Syst. Biol.">
        <title>Initial characterization of the human central proteome.</title>
        <authorList>
            <person name="Burkard T.R."/>
            <person name="Planyavsky M."/>
            <person name="Kaupe I."/>
            <person name="Breitwieser F.P."/>
            <person name="Buerckstuemmer T."/>
            <person name="Bennett K.L."/>
            <person name="Superti-Furga G."/>
            <person name="Colinge J."/>
        </authorList>
    </citation>
    <scope>IDENTIFICATION BY MASS SPECTROMETRY [LARGE SCALE ANALYSIS]</scope>
</reference>
<reference key="10">
    <citation type="journal article" date="2013" name="J. Proteome Res.">
        <title>Toward a comprehensive characterization of a human cancer cell phosphoproteome.</title>
        <authorList>
            <person name="Zhou H."/>
            <person name="Di Palma S."/>
            <person name="Preisinger C."/>
            <person name="Peng M."/>
            <person name="Polat A.N."/>
            <person name="Heck A.J."/>
            <person name="Mohammed S."/>
        </authorList>
    </citation>
    <scope>PHOSPHORYLATION [LARGE SCALE ANALYSIS] AT THR-34 AND SER-203</scope>
    <scope>IDENTIFICATION BY MASS SPECTROMETRY [LARGE SCALE ANALYSIS]</scope>
    <source>
        <tissue>Cervix carcinoma</tissue>
        <tissue>Erythroleukemia</tissue>
    </source>
</reference>
<organism>
    <name type="scientific">Homo sapiens</name>
    <name type="common">Human</name>
    <dbReference type="NCBI Taxonomy" id="9606"/>
    <lineage>
        <taxon>Eukaryota</taxon>
        <taxon>Metazoa</taxon>
        <taxon>Chordata</taxon>
        <taxon>Craniata</taxon>
        <taxon>Vertebrata</taxon>
        <taxon>Euteleostomi</taxon>
        <taxon>Mammalia</taxon>
        <taxon>Eutheria</taxon>
        <taxon>Euarchontoglires</taxon>
        <taxon>Primates</taxon>
        <taxon>Haplorrhini</taxon>
        <taxon>Catarrhini</taxon>
        <taxon>Hominidae</taxon>
        <taxon>Homo</taxon>
    </lineage>
</organism>
<protein>
    <recommendedName>
        <fullName evidence="4">Ribosome biogenesis protein SLX9 homolog</fullName>
    </recommendedName>
</protein>
<proteinExistence type="evidence at protein level"/>
<keyword id="KW-0002">3D-structure</keyword>
<keyword id="KW-0025">Alternative splicing</keyword>
<keyword id="KW-0539">Nucleus</keyword>
<keyword id="KW-0597">Phosphoprotein</keyword>
<keyword id="KW-1267">Proteomics identification</keyword>
<keyword id="KW-1185">Reference proteome</keyword>